<dbReference type="EMBL" id="AF303741">
    <property type="protein sequence ID" value="AAB94449.1"/>
    <property type="molecule type" value="Genomic_DNA"/>
</dbReference>
<dbReference type="PIR" id="T03075">
    <property type="entry name" value="T03075"/>
</dbReference>
<dbReference type="RefSeq" id="NP_149589.1">
    <property type="nucleotide sequence ID" value="NC_003038.1"/>
</dbReference>
<dbReference type="SMR" id="O55738"/>
<dbReference type="KEGG" id="vg:1733147"/>
<dbReference type="OrthoDB" id="34176at10239"/>
<dbReference type="Proteomes" id="UP000001359">
    <property type="component" value="Genome"/>
</dbReference>
<dbReference type="Gene3D" id="1.10.510.10">
    <property type="entry name" value="Transferase(Phosphotransferase) domain 1"/>
    <property type="match status" value="1"/>
</dbReference>
<dbReference type="InterPro" id="IPR011009">
    <property type="entry name" value="Kinase-like_dom_sf"/>
</dbReference>
<dbReference type="SUPFAM" id="SSF56112">
    <property type="entry name" value="Protein kinase-like (PK-like)"/>
    <property type="match status" value="1"/>
</dbReference>
<organismHost>
    <name type="scientific">Acheta domesticus</name>
    <name type="common">House cricket</name>
    <dbReference type="NCBI Taxonomy" id="6997"/>
</organismHost>
<organismHost>
    <name type="scientific">Chilo suppressalis</name>
    <name type="common">Asiatic rice borer moth</name>
    <dbReference type="NCBI Taxonomy" id="168631"/>
</organismHost>
<organismHost>
    <name type="scientific">Gryllus bimaculatus</name>
    <name type="common">Two-spotted cricket</name>
    <dbReference type="NCBI Taxonomy" id="6999"/>
</organismHost>
<organismHost>
    <name type="scientific">Gryllus campestris</name>
    <dbReference type="NCBI Taxonomy" id="58607"/>
</organismHost>
<organismHost>
    <name type="scientific">Spodoptera frugiperda</name>
    <name type="common">Fall armyworm</name>
    <dbReference type="NCBI Taxonomy" id="7108"/>
</organismHost>
<feature type="chain" id="PRO_0000378000" description="Uncharacterized protein 126R">
    <location>
        <begin position="1"/>
        <end position="273"/>
    </location>
</feature>
<organism>
    <name type="scientific">Invertebrate iridescent virus 6</name>
    <name type="common">IIV-6</name>
    <name type="synonym">Chilo iridescent virus</name>
    <dbReference type="NCBI Taxonomy" id="176652"/>
    <lineage>
        <taxon>Viruses</taxon>
        <taxon>Varidnaviria</taxon>
        <taxon>Bamfordvirae</taxon>
        <taxon>Nucleocytoviricota</taxon>
        <taxon>Megaviricetes</taxon>
        <taxon>Pimascovirales</taxon>
        <taxon>Iridoviridae</taxon>
        <taxon>Betairidovirinae</taxon>
        <taxon>Iridovirus</taxon>
    </lineage>
</organism>
<accession>O55738</accession>
<protein>
    <recommendedName>
        <fullName>Uncharacterized protein 126R</fullName>
    </recommendedName>
</protein>
<gene>
    <name type="ORF">IIV6-126R</name>
</gene>
<keyword id="KW-1185">Reference proteome</keyword>
<proteinExistence type="predicted"/>
<reference key="1">
    <citation type="journal article" date="2001" name="Virology">
        <title>Analysis of the first complete DNA sequence of an invertebrate iridovirus: coding strategy of the genome of Chilo iridescent virus.</title>
        <authorList>
            <person name="Jakob N.J."/>
            <person name="Mueller K."/>
            <person name="Bahr U."/>
            <person name="Darai G."/>
        </authorList>
    </citation>
    <scope>NUCLEOTIDE SEQUENCE [LARGE SCALE GENOMIC DNA]</scope>
</reference>
<reference key="2">
    <citation type="journal article" date="2007" name="Virol. J.">
        <title>Comparative genomic analysis of the family Iridoviridae: re-annotating and defining the core set of iridovirus genes.</title>
        <authorList>
            <person name="Eaton H.E."/>
            <person name="Metcalf J."/>
            <person name="Penny E."/>
            <person name="Tcherepanov V."/>
            <person name="Upton C."/>
            <person name="Brunetti C.R."/>
        </authorList>
    </citation>
    <scope>GENOME REANNOTATION</scope>
</reference>
<name>126R_IIV6</name>
<sequence length="273" mass="31709">MKSTFVRSLFSNLEHMNQDSSTICKFGDCYKLKTLIYPFMSGRKTEKIFTCQDVKKISKGEYGNRLIKIIPKKYIISTNNMRNVEVASEAYYNFVANDIEGIHQLVDYLESANHVFFVYHISRGRTITLQKLIETKYGMKIGPQKDYGTTVLNIFKTVVISSIEMYNHGIFHHKLNSSNILINMNTFSPSITNFNYASFVKDEDWKTIVKNLGILLYELWIGHRPDDNDYDEIKIILNHEDSEIHTGIKNFILTTLTKFVSKNEFNILIENLP</sequence>